<gene>
    <name evidence="1" type="primary">ctaB</name>
    <name type="ordered locus">APE_1878</name>
</gene>
<sequence length="302" mass="32293">MVSSTAGYRSSALGKLKAFISLTKPRQLALLMLTMYGAYFAGGGSLDPRMLALLTIMGFTSIGGVTAFNMYFDRDIDAIMGRTRRRPLPSGVLNPYEALAGSLALVIAGVLSAAAINTYVALTVIAGLYFDIIAYTQLTKRFTPLSIIFGSIAGSMPALGGWAAAAGSITTGGVLMALIVFLWQPMHVWFLGYYFKEEYSVARIPILPSNGNPRLVSSLIAVSLAGLIAVAWAFALYYGYGFLTAVITTVLAALAISRIGGFARTGERREALKLFKFASPIIAVVFIILPLERTLVYTLLLG</sequence>
<name>COXX_AERPE</name>
<proteinExistence type="inferred from homology"/>
<organism>
    <name type="scientific">Aeropyrum pernix (strain ATCC 700893 / DSM 11879 / JCM 9820 / NBRC 100138 / K1)</name>
    <dbReference type="NCBI Taxonomy" id="272557"/>
    <lineage>
        <taxon>Archaea</taxon>
        <taxon>Thermoproteota</taxon>
        <taxon>Thermoprotei</taxon>
        <taxon>Desulfurococcales</taxon>
        <taxon>Desulfurococcaceae</taxon>
        <taxon>Aeropyrum</taxon>
    </lineage>
</organism>
<protein>
    <recommendedName>
        <fullName evidence="1">Protoheme IX farnesyltransferase</fullName>
        <ecNumber evidence="1">2.5.1.141</ecNumber>
    </recommendedName>
    <alternativeName>
        <fullName evidence="1">Heme B farnesyltransferase</fullName>
    </alternativeName>
    <alternativeName>
        <fullName evidence="1">Heme O synthase</fullName>
    </alternativeName>
</protein>
<evidence type="ECO:0000255" key="1">
    <source>
        <dbReference type="HAMAP-Rule" id="MF_00154"/>
    </source>
</evidence>
<evidence type="ECO:0000305" key="2"/>
<comment type="function">
    <text evidence="1">Converts heme B (protoheme IX) to heme O by substitution of the vinyl group on carbon 2 of heme B porphyrin ring with a hydroxyethyl farnesyl side group.</text>
</comment>
<comment type="catalytic activity">
    <reaction evidence="1">
        <text>heme b + (2E,6E)-farnesyl diphosphate + H2O = Fe(II)-heme o + diphosphate</text>
        <dbReference type="Rhea" id="RHEA:28070"/>
        <dbReference type="ChEBI" id="CHEBI:15377"/>
        <dbReference type="ChEBI" id="CHEBI:33019"/>
        <dbReference type="ChEBI" id="CHEBI:60344"/>
        <dbReference type="ChEBI" id="CHEBI:60530"/>
        <dbReference type="ChEBI" id="CHEBI:175763"/>
        <dbReference type="EC" id="2.5.1.141"/>
    </reaction>
</comment>
<comment type="pathway">
    <text evidence="1">Porphyrin-containing compound metabolism; heme O biosynthesis; heme O from protoheme: step 1/1.</text>
</comment>
<comment type="subcellular location">
    <subcellularLocation>
        <location evidence="1">Cell membrane</location>
        <topology evidence="1">Multi-pass membrane protein</topology>
    </subcellularLocation>
</comment>
<comment type="miscellaneous">
    <text evidence="1">Carbon 2 of the heme B porphyrin ring is defined according to the Fischer nomenclature.</text>
</comment>
<comment type="similarity">
    <text evidence="1">Belongs to the UbiA prenyltransferase family. Protoheme IX farnesyltransferase subfamily.</text>
</comment>
<comment type="sequence caution" evidence="2">
    <conflict type="erroneous initiation">
        <sequence resource="EMBL-CDS" id="BAA80883"/>
    </conflict>
</comment>
<accession>Q9YAR5</accession>
<reference key="1">
    <citation type="journal article" date="1999" name="DNA Res.">
        <title>Complete genome sequence of an aerobic hyper-thermophilic crenarchaeon, Aeropyrum pernix K1.</title>
        <authorList>
            <person name="Kawarabayasi Y."/>
            <person name="Hino Y."/>
            <person name="Horikawa H."/>
            <person name="Yamazaki S."/>
            <person name="Haikawa Y."/>
            <person name="Jin-no K."/>
            <person name="Takahashi M."/>
            <person name="Sekine M."/>
            <person name="Baba S."/>
            <person name="Ankai A."/>
            <person name="Kosugi H."/>
            <person name="Hosoyama A."/>
            <person name="Fukui S."/>
            <person name="Nagai Y."/>
            <person name="Nishijima K."/>
            <person name="Nakazawa H."/>
            <person name="Takamiya M."/>
            <person name="Masuda S."/>
            <person name="Funahashi T."/>
            <person name="Tanaka T."/>
            <person name="Kudoh Y."/>
            <person name="Yamazaki J."/>
            <person name="Kushida N."/>
            <person name="Oguchi A."/>
            <person name="Aoki K."/>
            <person name="Kubota K."/>
            <person name="Nakamura Y."/>
            <person name="Nomura N."/>
            <person name="Sako Y."/>
            <person name="Kikuchi H."/>
        </authorList>
    </citation>
    <scope>NUCLEOTIDE SEQUENCE [LARGE SCALE GENOMIC DNA]</scope>
    <source>
        <strain>ATCC 700893 / DSM 11879 / JCM 9820 / NBRC 100138 / K1</strain>
    </source>
</reference>
<feature type="chain" id="PRO_0000346083" description="Protoheme IX farnesyltransferase">
    <location>
        <begin position="1"/>
        <end position="302"/>
    </location>
</feature>
<feature type="transmembrane region" description="Helical" evidence="1">
    <location>
        <begin position="28"/>
        <end position="48"/>
    </location>
</feature>
<feature type="transmembrane region" description="Helical" evidence="1">
    <location>
        <begin position="50"/>
        <end position="70"/>
    </location>
</feature>
<feature type="transmembrane region" description="Helical" evidence="1">
    <location>
        <begin position="93"/>
        <end position="115"/>
    </location>
</feature>
<feature type="transmembrane region" description="Helical" evidence="1">
    <location>
        <begin position="119"/>
        <end position="138"/>
    </location>
</feature>
<feature type="transmembrane region" description="Helical" evidence="1">
    <location>
        <begin position="147"/>
        <end position="167"/>
    </location>
</feature>
<feature type="transmembrane region" description="Helical" evidence="1">
    <location>
        <begin position="172"/>
        <end position="192"/>
    </location>
</feature>
<feature type="transmembrane region" description="Helical" evidence="1">
    <location>
        <begin position="219"/>
        <end position="239"/>
    </location>
</feature>
<feature type="transmembrane region" description="Helical" evidence="1">
    <location>
        <begin position="242"/>
        <end position="262"/>
    </location>
</feature>
<feature type="transmembrane region" description="Helical" evidence="1">
    <location>
        <begin position="271"/>
        <end position="291"/>
    </location>
</feature>
<keyword id="KW-1003">Cell membrane</keyword>
<keyword id="KW-0350">Heme biosynthesis</keyword>
<keyword id="KW-0472">Membrane</keyword>
<keyword id="KW-1185">Reference proteome</keyword>
<keyword id="KW-0808">Transferase</keyword>
<keyword id="KW-0812">Transmembrane</keyword>
<keyword id="KW-1133">Transmembrane helix</keyword>
<dbReference type="EC" id="2.5.1.141" evidence="1"/>
<dbReference type="EMBL" id="BA000002">
    <property type="protein sequence ID" value="BAA80883.1"/>
    <property type="status" value="ALT_INIT"/>
    <property type="molecule type" value="Genomic_DNA"/>
</dbReference>
<dbReference type="PIR" id="F72574">
    <property type="entry name" value="F72574"/>
</dbReference>
<dbReference type="SMR" id="Q9YAR5"/>
<dbReference type="STRING" id="272557.APE_1878"/>
<dbReference type="EnsemblBacteria" id="BAA80883">
    <property type="protein sequence ID" value="BAA80883"/>
    <property type="gene ID" value="APE_1878"/>
</dbReference>
<dbReference type="KEGG" id="ape:APE_1878"/>
<dbReference type="eggNOG" id="arCOG00479">
    <property type="taxonomic scope" value="Archaea"/>
</dbReference>
<dbReference type="UniPathway" id="UPA00834">
    <property type="reaction ID" value="UER00712"/>
</dbReference>
<dbReference type="Proteomes" id="UP000002518">
    <property type="component" value="Chromosome"/>
</dbReference>
<dbReference type="GO" id="GO:0005886">
    <property type="term" value="C:plasma membrane"/>
    <property type="evidence" value="ECO:0007669"/>
    <property type="project" value="UniProtKB-SubCell"/>
</dbReference>
<dbReference type="GO" id="GO:0008495">
    <property type="term" value="F:protoheme IX farnesyltransferase activity"/>
    <property type="evidence" value="ECO:0007669"/>
    <property type="project" value="UniProtKB-UniRule"/>
</dbReference>
<dbReference type="GO" id="GO:0048034">
    <property type="term" value="P:heme O biosynthetic process"/>
    <property type="evidence" value="ECO:0007669"/>
    <property type="project" value="UniProtKB-UniRule"/>
</dbReference>
<dbReference type="CDD" id="cd13957">
    <property type="entry name" value="PT_UbiA_Cox10"/>
    <property type="match status" value="1"/>
</dbReference>
<dbReference type="Gene3D" id="1.10.357.140">
    <property type="entry name" value="UbiA prenyltransferase"/>
    <property type="match status" value="1"/>
</dbReference>
<dbReference type="HAMAP" id="MF_00154">
    <property type="entry name" value="CyoE_CtaB"/>
    <property type="match status" value="1"/>
</dbReference>
<dbReference type="InterPro" id="IPR006369">
    <property type="entry name" value="Protohaem_IX_farnesylTrfase"/>
</dbReference>
<dbReference type="InterPro" id="IPR000537">
    <property type="entry name" value="UbiA_prenyltransferase"/>
</dbReference>
<dbReference type="InterPro" id="IPR030470">
    <property type="entry name" value="UbiA_prenylTrfase_CS"/>
</dbReference>
<dbReference type="InterPro" id="IPR044878">
    <property type="entry name" value="UbiA_sf"/>
</dbReference>
<dbReference type="NCBIfam" id="TIGR01473">
    <property type="entry name" value="cyoE_ctaB"/>
    <property type="match status" value="1"/>
</dbReference>
<dbReference type="PANTHER" id="PTHR43448">
    <property type="entry name" value="PROTOHEME IX FARNESYLTRANSFERASE, MITOCHONDRIAL"/>
    <property type="match status" value="1"/>
</dbReference>
<dbReference type="PANTHER" id="PTHR43448:SF2">
    <property type="entry name" value="PROTOHEME IX FARNESYLTRANSFERASE, MITOCHONDRIAL"/>
    <property type="match status" value="1"/>
</dbReference>
<dbReference type="Pfam" id="PF01040">
    <property type="entry name" value="UbiA"/>
    <property type="match status" value="1"/>
</dbReference>
<dbReference type="PROSITE" id="PS00943">
    <property type="entry name" value="UBIA"/>
    <property type="match status" value="1"/>
</dbReference>